<reference key="1">
    <citation type="journal article" date="2009" name="ISME J.">
        <title>The genome sequence of the psychrophilic archaeon, Methanococcoides burtonii: the role of genome evolution in cold adaptation.</title>
        <authorList>
            <person name="Allen M.A."/>
            <person name="Lauro F.M."/>
            <person name="Williams T.J."/>
            <person name="Burg D."/>
            <person name="Siddiqui K.S."/>
            <person name="De Francisci D."/>
            <person name="Chong K.W."/>
            <person name="Pilak O."/>
            <person name="Chew H.H."/>
            <person name="De Maere M.Z."/>
            <person name="Ting L."/>
            <person name="Katrib M."/>
            <person name="Ng C."/>
            <person name="Sowers K.R."/>
            <person name="Galperin M.Y."/>
            <person name="Anderson I.J."/>
            <person name="Ivanova N."/>
            <person name="Dalin E."/>
            <person name="Martinez M."/>
            <person name="Lapidus A."/>
            <person name="Hauser L."/>
            <person name="Land M."/>
            <person name="Thomas T."/>
            <person name="Cavicchioli R."/>
        </authorList>
    </citation>
    <scope>NUCLEOTIDE SEQUENCE [LARGE SCALE GENOMIC DNA]</scope>
    <source>
        <strain>DSM 6242 / NBRC 107633 / OCM 468 / ACE-M</strain>
    </source>
</reference>
<organism>
    <name type="scientific">Methanococcoides burtonii (strain DSM 6242 / NBRC 107633 / OCM 468 / ACE-M)</name>
    <dbReference type="NCBI Taxonomy" id="259564"/>
    <lineage>
        <taxon>Archaea</taxon>
        <taxon>Methanobacteriati</taxon>
        <taxon>Methanobacteriota</taxon>
        <taxon>Stenosarchaea group</taxon>
        <taxon>Methanomicrobia</taxon>
        <taxon>Methanosarcinales</taxon>
        <taxon>Methanosarcinaceae</taxon>
        <taxon>Methanococcoides</taxon>
    </lineage>
</organism>
<evidence type="ECO:0000255" key="1">
    <source>
        <dbReference type="HAMAP-Rule" id="MF_00078"/>
    </source>
</evidence>
<proteinExistence type="inferred from homology"/>
<protein>
    <recommendedName>
        <fullName evidence="1">Phosphomevalonate dehydratase small subunit</fullName>
        <shortName evidence="1">PMDh small subunit</shortName>
        <shortName evidence="1">PMDh-S</shortName>
        <ecNumber evidence="1">4.2.1.182</ecNumber>
    </recommendedName>
</protein>
<dbReference type="EC" id="4.2.1.182" evidence="1"/>
<dbReference type="EMBL" id="CP000300">
    <property type="protein sequence ID" value="ABE52378.1"/>
    <property type="molecule type" value="Genomic_DNA"/>
</dbReference>
<dbReference type="RefSeq" id="WP_011499522.1">
    <property type="nucleotide sequence ID" value="NC_007955.1"/>
</dbReference>
<dbReference type="SMR" id="Q12VZ8"/>
<dbReference type="STRING" id="259564.Mbur_1471"/>
<dbReference type="GeneID" id="3998369"/>
<dbReference type="KEGG" id="mbu:Mbur_1471"/>
<dbReference type="HOGENOM" id="CLU_141583_2_0_2"/>
<dbReference type="OrthoDB" id="18062at2157"/>
<dbReference type="UniPathway" id="UPA00057"/>
<dbReference type="Proteomes" id="UP000001979">
    <property type="component" value="Chromosome"/>
</dbReference>
<dbReference type="GO" id="GO:0016836">
    <property type="term" value="F:hydro-lyase activity"/>
    <property type="evidence" value="ECO:0007669"/>
    <property type="project" value="UniProtKB-UniRule"/>
</dbReference>
<dbReference type="GO" id="GO:0019287">
    <property type="term" value="P:isopentenyl diphosphate biosynthetic process, mevalonate pathway"/>
    <property type="evidence" value="ECO:0007669"/>
    <property type="project" value="UniProtKB-UniRule"/>
</dbReference>
<dbReference type="CDD" id="cd01356">
    <property type="entry name" value="AcnX_swivel"/>
    <property type="match status" value="1"/>
</dbReference>
<dbReference type="Gene3D" id="3.50.30.10">
    <property type="entry name" value="Phosphohistidine domain"/>
    <property type="match status" value="1"/>
</dbReference>
<dbReference type="HAMAP" id="MF_00078">
    <property type="entry name" value="PMDh_S"/>
    <property type="match status" value="1"/>
</dbReference>
<dbReference type="InterPro" id="IPR012016">
    <property type="entry name" value="PMDh-S-like"/>
</dbReference>
<dbReference type="InterPro" id="IPR002840">
    <property type="entry name" value="PMDh-S-like_dom"/>
</dbReference>
<dbReference type="InterPro" id="IPR020794">
    <property type="entry name" value="PMDh_S"/>
</dbReference>
<dbReference type="NCBIfam" id="NF003046">
    <property type="entry name" value="PRK03955.1"/>
    <property type="match status" value="1"/>
</dbReference>
<dbReference type="PANTHER" id="PTHR36577">
    <property type="entry name" value="DUF521 DOMAIN PROTEIN (AFU_ORTHOLOGUE AFUA_6G00490)"/>
    <property type="match status" value="1"/>
</dbReference>
<dbReference type="PANTHER" id="PTHR36577:SF3">
    <property type="entry name" value="DUF521 DOMAIN PROTEIN (AFU_ORTHOLOGUE AFUA_6G00490)"/>
    <property type="match status" value="1"/>
</dbReference>
<dbReference type="Pfam" id="PF01989">
    <property type="entry name" value="AcnX_swivel_put"/>
    <property type="match status" value="1"/>
</dbReference>
<dbReference type="PIRSF" id="PIRSF004966">
    <property type="entry name" value="UCP004966"/>
    <property type="match status" value="1"/>
</dbReference>
<dbReference type="SUPFAM" id="SSF52016">
    <property type="entry name" value="LeuD/IlvD-like"/>
    <property type="match status" value="1"/>
</dbReference>
<accession>Q12VZ8</accession>
<name>PMDHS_METBU</name>
<keyword id="KW-0414">Isoprene biosynthesis</keyword>
<keyword id="KW-0456">Lyase</keyword>
<feature type="chain" id="PRO_1000009473" description="Phosphomevalonate dehydratase small subunit">
    <location>
        <begin position="1"/>
        <end position="137"/>
    </location>
</feature>
<feature type="active site" description="Proton acceptor" evidence="1">
    <location>
        <position position="65"/>
    </location>
</feature>
<gene>
    <name type="ordered locus">Mbur_1471</name>
</gene>
<sequence length="137" mass="14803">MVTIKIECRTIARGVAEGEVLLSEDALSFLGNVDPKTGVVVDPGHAIYGECIRDKILVFPHGKGSTVGSYVIYQLKKNNVSPAAMINIDSEPIVAVGAIISDIPLVDRLDKDPFTIFKNGDRVKVDSTSGFVELMDR</sequence>
<comment type="function">
    <text evidence="1">Component of a hydro-lyase that catalyzes the dehydration of mevalonate 5-phosphate (MVA5P) to form trans-anhydromevalonate 5-phosphate (tAHMP). Involved in the archaeal mevalonate (MVA) pathway, which provides fundamental precursors for isoprenoid biosynthesis, such as isopentenyl diphosphate (IPP) and dimethylallyl diphosphate (DMAPP).</text>
</comment>
<comment type="catalytic activity">
    <reaction evidence="1">
        <text>(R)-5-phosphomevalonate = (2E)-3-methyl-5-phosphooxypent-2-enoate + H2O</text>
        <dbReference type="Rhea" id="RHEA:78975"/>
        <dbReference type="ChEBI" id="CHEBI:15377"/>
        <dbReference type="ChEBI" id="CHEBI:58146"/>
        <dbReference type="ChEBI" id="CHEBI:229665"/>
        <dbReference type="EC" id="4.2.1.182"/>
    </reaction>
    <physiologicalReaction direction="left-to-right" evidence="1">
        <dbReference type="Rhea" id="RHEA:78976"/>
    </physiologicalReaction>
</comment>
<comment type="pathway">
    <text evidence="1">Isoprenoid biosynthesis; isopentenyl diphosphate biosynthesis via mevalonate pathway.</text>
</comment>
<comment type="subunit">
    <text evidence="1">Heterodimer composed of a large subunit (PMDh-L) and a small subunit (PMDh-S).</text>
</comment>
<comment type="similarity">
    <text evidence="1">Belongs to the AcnX type II small subunit family.</text>
</comment>